<protein>
    <recommendedName>
        <fullName evidence="1">Ferric/cupric reductase transmembrane component 1</fullName>
        <ecNumber evidence="1">1.16.1.9</ecNumber>
    </recommendedName>
    <alternativeName>
        <fullName evidence="1">Ferric-chelate reductase 1</fullName>
    </alternativeName>
</protein>
<evidence type="ECO:0000250" key="1">
    <source>
        <dbReference type="UniProtKB" id="P32791"/>
    </source>
</evidence>
<evidence type="ECO:0000255" key="2"/>
<evidence type="ECO:0000255" key="3">
    <source>
        <dbReference type="PROSITE-ProRule" id="PRU00498"/>
    </source>
</evidence>
<evidence type="ECO:0000255" key="4">
    <source>
        <dbReference type="PROSITE-ProRule" id="PRU00716"/>
    </source>
</evidence>
<evidence type="ECO:0000256" key="5">
    <source>
        <dbReference type="SAM" id="MobiDB-lite"/>
    </source>
</evidence>
<evidence type="ECO:0000269" key="6">
    <source>
    </source>
</evidence>
<evidence type="ECO:0000269" key="7">
    <source>
    </source>
</evidence>
<evidence type="ECO:0000269" key="8">
    <source>
    </source>
</evidence>
<evidence type="ECO:0000269" key="9">
    <source>
    </source>
</evidence>
<evidence type="ECO:0000269" key="10">
    <source>
    </source>
</evidence>
<evidence type="ECO:0000303" key="11">
    <source>
    </source>
</evidence>
<evidence type="ECO:0000305" key="12"/>
<dbReference type="EC" id="1.16.1.9" evidence="1"/>
<dbReference type="EMBL" id="CP017626">
    <property type="protein sequence ID" value="AOW29307.1"/>
    <property type="molecule type" value="Genomic_DNA"/>
</dbReference>
<dbReference type="RefSeq" id="XP_716571.2">
    <property type="nucleotide sequence ID" value="XM_711478.2"/>
</dbReference>
<dbReference type="SMR" id="Q5A446"/>
<dbReference type="FunCoup" id="Q5A446">
    <property type="interactions" value="410"/>
</dbReference>
<dbReference type="STRING" id="237561.Q5A446"/>
<dbReference type="GlyCosmos" id="Q5A446">
    <property type="glycosylation" value="8 sites, No reported glycans"/>
</dbReference>
<dbReference type="EnsemblFungi" id="C4_05770C_A-T">
    <property type="protein sequence ID" value="C4_05770C_A-T-p1"/>
    <property type="gene ID" value="C4_05770C_A"/>
</dbReference>
<dbReference type="GeneID" id="3641810"/>
<dbReference type="KEGG" id="cal:CAALFM_C405770CA"/>
<dbReference type="CGD" id="CAL0000193490">
    <property type="gene designation" value="CFL1"/>
</dbReference>
<dbReference type="VEuPathDB" id="FungiDB:C4_05770C_A"/>
<dbReference type="eggNOG" id="KOG0039">
    <property type="taxonomic scope" value="Eukaryota"/>
</dbReference>
<dbReference type="HOGENOM" id="CLU_010365_4_0_1"/>
<dbReference type="InParanoid" id="Q5A446"/>
<dbReference type="OrthoDB" id="4494341at2759"/>
<dbReference type="PRO" id="PR:Q5A446"/>
<dbReference type="Proteomes" id="UP000000559">
    <property type="component" value="Chromosome 4"/>
</dbReference>
<dbReference type="GO" id="GO:0005886">
    <property type="term" value="C:plasma membrane"/>
    <property type="evidence" value="ECO:0000316"/>
    <property type="project" value="CGD"/>
</dbReference>
<dbReference type="GO" id="GO:0052851">
    <property type="term" value="F:ferric-chelate reductase (NADPH) activity"/>
    <property type="evidence" value="ECO:0007669"/>
    <property type="project" value="UniProtKB-EC"/>
</dbReference>
<dbReference type="GO" id="GO:0000293">
    <property type="term" value="F:ferric-chelate reductase activity"/>
    <property type="evidence" value="ECO:0000316"/>
    <property type="project" value="CGD"/>
</dbReference>
<dbReference type="GO" id="GO:0046872">
    <property type="term" value="F:metal ion binding"/>
    <property type="evidence" value="ECO:0007669"/>
    <property type="project" value="UniProtKB-KW"/>
</dbReference>
<dbReference type="GO" id="GO:0010106">
    <property type="term" value="P:cellular response to iron ion starvation"/>
    <property type="evidence" value="ECO:0000315"/>
    <property type="project" value="CGD"/>
</dbReference>
<dbReference type="GO" id="GO:0015677">
    <property type="term" value="P:copper ion import"/>
    <property type="evidence" value="ECO:0000316"/>
    <property type="project" value="CGD"/>
</dbReference>
<dbReference type="GO" id="GO:0044180">
    <property type="term" value="P:filamentous growth of a unicellular organism"/>
    <property type="evidence" value="ECO:0000315"/>
    <property type="project" value="CGD"/>
</dbReference>
<dbReference type="GO" id="GO:0006879">
    <property type="term" value="P:intracellular iron ion homeostasis"/>
    <property type="evidence" value="ECO:0000318"/>
    <property type="project" value="GO_Central"/>
</dbReference>
<dbReference type="GO" id="GO:0006826">
    <property type="term" value="P:iron ion transport"/>
    <property type="evidence" value="ECO:0000316"/>
    <property type="project" value="CGD"/>
</dbReference>
<dbReference type="CDD" id="cd06186">
    <property type="entry name" value="NOX_Duox_like_FAD_NADP"/>
    <property type="match status" value="1"/>
</dbReference>
<dbReference type="FunFam" id="3.40.50.80:FF:000046">
    <property type="entry name" value="Probable ferric reductase transmembrane component"/>
    <property type="match status" value="1"/>
</dbReference>
<dbReference type="Gene3D" id="3.40.50.80">
    <property type="entry name" value="Nucleotide-binding domain of ferredoxin-NADP reductase (FNR) module"/>
    <property type="match status" value="1"/>
</dbReference>
<dbReference type="InterPro" id="IPR013112">
    <property type="entry name" value="FAD-bd_8"/>
</dbReference>
<dbReference type="InterPro" id="IPR017927">
    <property type="entry name" value="FAD-bd_FR_type"/>
</dbReference>
<dbReference type="InterPro" id="IPR013130">
    <property type="entry name" value="Fe3_Rdtase_TM_dom"/>
</dbReference>
<dbReference type="InterPro" id="IPR013121">
    <property type="entry name" value="Fe_red_NAD-bd_6"/>
</dbReference>
<dbReference type="InterPro" id="IPR051410">
    <property type="entry name" value="Ferric/Cupric_Reductase"/>
</dbReference>
<dbReference type="InterPro" id="IPR039261">
    <property type="entry name" value="FNR_nucleotide-bd"/>
</dbReference>
<dbReference type="PANTHER" id="PTHR32361:SF9">
    <property type="entry name" value="FERRIC REDUCTASE TRANSMEMBRANE COMPONENT 3-RELATED"/>
    <property type="match status" value="1"/>
</dbReference>
<dbReference type="PANTHER" id="PTHR32361">
    <property type="entry name" value="FERRIC/CUPRIC REDUCTASE TRANSMEMBRANE COMPONENT"/>
    <property type="match status" value="1"/>
</dbReference>
<dbReference type="Pfam" id="PF08022">
    <property type="entry name" value="FAD_binding_8"/>
    <property type="match status" value="1"/>
</dbReference>
<dbReference type="Pfam" id="PF01794">
    <property type="entry name" value="Ferric_reduct"/>
    <property type="match status" value="1"/>
</dbReference>
<dbReference type="Pfam" id="PF08030">
    <property type="entry name" value="NAD_binding_6"/>
    <property type="match status" value="1"/>
</dbReference>
<dbReference type="SFLD" id="SFLDS00052">
    <property type="entry name" value="Ferric_Reductase_Domain"/>
    <property type="match status" value="1"/>
</dbReference>
<dbReference type="SFLD" id="SFLDG01168">
    <property type="entry name" value="Ferric_reductase_subgroup_(FRE"/>
    <property type="match status" value="1"/>
</dbReference>
<dbReference type="SUPFAM" id="SSF52343">
    <property type="entry name" value="Ferredoxin reductase-like, C-terminal NADP-linked domain"/>
    <property type="match status" value="1"/>
</dbReference>
<dbReference type="PROSITE" id="PS51384">
    <property type="entry name" value="FAD_FR"/>
    <property type="match status" value="1"/>
</dbReference>
<sequence>MKIQQLIVFLFAVVLIDARTPKRYSELDIVMSTCTTFIGKYGTVCTSTGKRSTNWNCYCKTDAGFGTISDCLVRGFNNNTNIISKFTESCNMTESKFHAKYDKIQAEFKTNGTEYAKMTTKSSSGSKTSASASKSSKSTGSSNASKSSTNAHGSNSSTSSTSSSSSKSGKGNSGTSTTETITTPLLIDYKKFTPYKDAYQMSNNNFNLSINYGSGLLGYWAGILAIAIFANMIKKMFPSLTNYLSGSISNLFRKHLFLPATFRKKKAQEFSIGVYGFFDGLIPTRLETIIVVIFVVLTGLFSALHIHHVKDNPQYATKNAELGHLIADRTGILGTFLIPLLILFGGRNNFLQWLTGWDFATFIMYHRWISRVDVLLIIVHAITFSVSDKATGKYNTRMKRDFMIWGTVSTICGGFILFQAMLFFRRKCYEVFFLIHIVLVVFFVVGGYYHLESQGYGDFMWAAIAVWAFDRVVRLGRIFFFGARKATVSIKGDDTLKIEVPKPKYWKSVAGGHAFIHFLKPTLFLQSHPFTFTTTESNDKIVLYAKIKNGITSNIAKYLSPLPGNTATIRVLVEGPYGEPSSAGRNCKNVVFVAGGNGIPGIYSECVDLAKKSKNQSIKLIWIIRHWKSLSWFTEELEYLKKTNVQSTIYVTQPQDCSGLECFEHDVSFEKKSDEKDSVESSQYSLISNIKQGLSHVEFIEGRPDISTQVEQEVKQADGAIGFVTCGHPAMVDELRFAVTQNLNVSKHRVEYHEQLQTWA</sequence>
<accession>Q5A446</accession>
<accession>A0A1D8PME9</accession>
<organism>
    <name type="scientific">Candida albicans (strain SC5314 / ATCC MYA-2876)</name>
    <name type="common">Yeast</name>
    <dbReference type="NCBI Taxonomy" id="237561"/>
    <lineage>
        <taxon>Eukaryota</taxon>
        <taxon>Fungi</taxon>
        <taxon>Dikarya</taxon>
        <taxon>Ascomycota</taxon>
        <taxon>Saccharomycotina</taxon>
        <taxon>Pichiomycetes</taxon>
        <taxon>Debaryomycetaceae</taxon>
        <taxon>Candida/Lodderomyces clade</taxon>
        <taxon>Candida</taxon>
    </lineage>
</organism>
<comment type="function">
    <text evidence="1 6 10">Ferric reductase responsible for reducing extracellular iron and copper prior to import. Catalyzes the reductive uptake of Fe(3+)-salts and Fe(3+) bound to catecholate or hydroxamate siderophores. Fe(3+) is reduced to Fe(2+), which then dissociates from the siderophore and can be imported by the high-affinity Fe(2+) transport complex in the plasma membrane. Also participates in Cu(2+) reduction and Cu(+) uptake (By similarity). Involved in maintenance of cell wall integrity (CWI), mitochondrial function, and interaction between the pathogen and the host.</text>
</comment>
<comment type="catalytic activity">
    <reaction evidence="1">
        <text>2 a Fe(II)-siderophore + NADP(+) + H(+) = 2 a Fe(III)-siderophore + NADPH</text>
        <dbReference type="Rhea" id="RHEA:28795"/>
        <dbReference type="Rhea" id="RHEA-COMP:11342"/>
        <dbReference type="Rhea" id="RHEA-COMP:11344"/>
        <dbReference type="ChEBI" id="CHEBI:15378"/>
        <dbReference type="ChEBI" id="CHEBI:29033"/>
        <dbReference type="ChEBI" id="CHEBI:29034"/>
        <dbReference type="ChEBI" id="CHEBI:57783"/>
        <dbReference type="ChEBI" id="CHEBI:58349"/>
        <dbReference type="EC" id="1.16.1.9"/>
    </reaction>
</comment>
<comment type="cofactor">
    <cofactor evidence="1">
        <name>FAD</name>
        <dbReference type="ChEBI" id="CHEBI:57692"/>
    </cofactor>
</comment>
<comment type="cofactor">
    <cofactor evidence="1">
        <name>heme</name>
        <dbReference type="ChEBI" id="CHEBI:30413"/>
    </cofactor>
</comment>
<comment type="subcellular location">
    <subcellularLocation>
        <location evidence="1">Cell membrane</location>
        <topology evidence="1">Multi-pass membrane protein</topology>
    </subcellularLocation>
</comment>
<comment type="induction">
    <text evidence="6 7 8 9">Transcription is negatively regulated by SFU1, copper, amphotericin B, and caspofungin; and induced by ciclopirox olamine.</text>
</comment>
<comment type="disruption phenotype">
    <text evidence="10">Leads to abnormal cell wall composition, decreased ability of adhesion, and hypersensitivity to cell wall stresses. Increases mitochondrial activity and shows abnormal mitochondrial morphology. Also results in up-regulation of the expression of the cell wall integrity (CWI) genes PGA13 and CRH11, enhanded secretion, and decreased ability to invade HeLa cells.</text>
</comment>
<comment type="similarity">
    <text evidence="12">Belongs to the ferric reductase (FRE) family.</text>
</comment>
<gene>
    <name evidence="11" type="primary">CFL1</name>
    <name type="synonym">FRE1</name>
    <name type="ordered locus">CAALFM_C405770CA</name>
    <name type="ORF">CaO19.1263</name>
    <name type="ORF">CaO19.8848</name>
</gene>
<proteinExistence type="evidence at transcript level"/>
<name>FRE1_CANAL</name>
<reference key="1">
    <citation type="journal article" date="2004" name="Proc. Natl. Acad. Sci. U.S.A.">
        <title>The diploid genome sequence of Candida albicans.</title>
        <authorList>
            <person name="Jones T."/>
            <person name="Federspiel N.A."/>
            <person name="Chibana H."/>
            <person name="Dungan J."/>
            <person name="Kalman S."/>
            <person name="Magee B.B."/>
            <person name="Newport G."/>
            <person name="Thorstenson Y.R."/>
            <person name="Agabian N."/>
            <person name="Magee P.T."/>
            <person name="Davis R.W."/>
            <person name="Scherer S."/>
        </authorList>
    </citation>
    <scope>NUCLEOTIDE SEQUENCE [LARGE SCALE GENOMIC DNA]</scope>
    <source>
        <strain>SC5314 / ATCC MYA-2876</strain>
    </source>
</reference>
<reference key="2">
    <citation type="journal article" date="2007" name="Genome Biol.">
        <title>Assembly of the Candida albicans genome into sixteen supercontigs aligned on the eight chromosomes.</title>
        <authorList>
            <person name="van het Hoog M."/>
            <person name="Rast T.J."/>
            <person name="Martchenko M."/>
            <person name="Grindle S."/>
            <person name="Dignard D."/>
            <person name="Hogues H."/>
            <person name="Cuomo C."/>
            <person name="Berriman M."/>
            <person name="Scherer S."/>
            <person name="Magee B.B."/>
            <person name="Whiteway M."/>
            <person name="Chibana H."/>
            <person name="Nantel A."/>
            <person name="Magee P.T."/>
        </authorList>
    </citation>
    <scope>GENOME REANNOTATION</scope>
    <source>
        <strain>SC5314 / ATCC MYA-2876</strain>
    </source>
</reference>
<reference key="3">
    <citation type="journal article" date="2013" name="Genome Biol.">
        <title>Assembly of a phased diploid Candida albicans genome facilitates allele-specific measurements and provides a simple model for repeat and indel structure.</title>
        <authorList>
            <person name="Muzzey D."/>
            <person name="Schwartz K."/>
            <person name="Weissman J.S."/>
            <person name="Sherlock G."/>
        </authorList>
    </citation>
    <scope>NUCLEOTIDE SEQUENCE [LARGE SCALE GENOMIC DNA]</scope>
    <scope>GENOME REANNOTATION</scope>
    <source>
        <strain>SC5314 / ATCC MYA-2876</strain>
    </source>
</reference>
<reference key="4">
    <citation type="journal article" date="2000" name="Microbiology">
        <title>Candida albicans CFL1 encodes a functional ferric reductase activity that can rescue a Saccharomyces cerevisiae fre1 mutant.</title>
        <authorList>
            <person name="Hammacott J.E."/>
            <person name="Williams P.H."/>
            <person name="Cashmore A.M."/>
        </authorList>
    </citation>
    <scope>FUNCTION</scope>
    <scope>INDUCTION</scope>
</reference>
<reference key="5">
    <citation type="journal article" date="2003" name="Antimicrob. Agents Chemother.">
        <title>Ciclopirox olamine treatment affects the expression pattern of Candida albicans genes encoding virulence factors, iron metabolism proteins, and drug resistance factors.</title>
        <authorList>
            <person name="Niewerth M."/>
            <person name="Kunze D."/>
            <person name="Seibold M."/>
            <person name="Schaller M."/>
            <person name="Korting H.C."/>
            <person name="Hube B."/>
        </authorList>
    </citation>
    <scope>INDUCTION</scope>
</reference>
<reference key="6">
    <citation type="journal article" date="2005" name="Antimicrob. Agents Chemother.">
        <title>Genome-wide expression profiling of the response to azole, polyene, echinocandin, and pyrimidine antifungal agents in Candida albicans.</title>
        <authorList>
            <person name="Liu T.T."/>
            <person name="Lee R.E."/>
            <person name="Barker K.S."/>
            <person name="Lee R.E."/>
            <person name="Wei L."/>
            <person name="Homayouni R."/>
            <person name="Rogers P.D."/>
        </authorList>
    </citation>
    <scope>INDUCTION</scope>
</reference>
<reference key="7">
    <citation type="journal article" date="2005" name="J. Antimicrob. Chemother.">
        <title>Oxygen accessibility and iron levels are critical factors for the antifungal action of ciclopirox against Candida albicans.</title>
        <authorList>
            <person name="Sigle H.C."/>
            <person name="Thewes S."/>
            <person name="Niewerth M."/>
            <person name="Korting H.C."/>
            <person name="Schafer-Korting M."/>
            <person name="Hube B."/>
        </authorList>
    </citation>
    <scope>INDUCTION</scope>
</reference>
<reference key="8">
    <citation type="journal article" date="2014" name="FEMS Yeast Res.">
        <title>A novel role of the ferric reductase Cfl1 in cell wall integrity, mitochondrial function, and invasion to host cells in Candida albicans.</title>
        <authorList>
            <person name="Yu Q."/>
            <person name="Dong Y."/>
            <person name="Xu N."/>
            <person name="Qian K."/>
            <person name="Chen Y."/>
            <person name="Zhang B."/>
            <person name="Xing L."/>
            <person name="Li M."/>
        </authorList>
    </citation>
    <scope>DISRUPTION PHENOTYPE</scope>
    <scope>FUNCTION</scope>
</reference>
<feature type="signal peptide" evidence="2">
    <location>
        <begin position="1"/>
        <end position="18"/>
    </location>
</feature>
<feature type="chain" id="PRO_0000431507" description="Ferric/cupric reductase transmembrane component 1" evidence="2">
    <location>
        <begin position="19"/>
        <end position="760"/>
    </location>
</feature>
<feature type="topological domain" description="Extracellular" evidence="12">
    <location>
        <begin position="19"/>
        <end position="212"/>
    </location>
</feature>
<feature type="transmembrane region" description="Helical; Name=1" evidence="2">
    <location>
        <begin position="213"/>
        <end position="233"/>
    </location>
</feature>
<feature type="topological domain" description="Cytoplasmic" evidence="12">
    <location>
        <begin position="234"/>
        <end position="288"/>
    </location>
</feature>
<feature type="transmembrane region" description="Helical; Name=2" evidence="2">
    <location>
        <begin position="289"/>
        <end position="309"/>
    </location>
</feature>
<feature type="topological domain" description="Extracellular" evidence="12">
    <location>
        <begin position="310"/>
        <end position="324"/>
    </location>
</feature>
<feature type="transmembrane region" description="Helical; Name=3" evidence="2">
    <location>
        <begin position="325"/>
        <end position="345"/>
    </location>
</feature>
<feature type="topological domain" description="Cytoplasmic" evidence="12">
    <location>
        <begin position="346"/>
        <end position="371"/>
    </location>
</feature>
<feature type="transmembrane region" description="Helical; Name=4" evidence="2">
    <location>
        <begin position="372"/>
        <end position="392"/>
    </location>
</feature>
<feature type="topological domain" description="Extracellular" evidence="12">
    <location>
        <begin position="393"/>
        <end position="403"/>
    </location>
</feature>
<feature type="transmembrane region" description="Helical; Name=5" evidence="2">
    <location>
        <begin position="404"/>
        <end position="424"/>
    </location>
</feature>
<feature type="topological domain" description="Cytoplasmic" evidence="12">
    <location>
        <begin position="425"/>
        <end position="430"/>
    </location>
</feature>
<feature type="transmembrane region" description="Helical; Name=6" evidence="2">
    <location>
        <begin position="431"/>
        <end position="451"/>
    </location>
</feature>
<feature type="topological domain" description="Extracellular" evidence="12">
    <location>
        <begin position="452"/>
        <end position="760"/>
    </location>
</feature>
<feature type="domain" description="Ferric oxidoreductase" evidence="2">
    <location>
        <begin position="330"/>
        <end position="445"/>
    </location>
</feature>
<feature type="domain" description="FAD-binding FR-type" evidence="4">
    <location>
        <begin position="465"/>
        <end position="583"/>
    </location>
</feature>
<feature type="region of interest" description="Disordered" evidence="5">
    <location>
        <begin position="119"/>
        <end position="177"/>
    </location>
</feature>
<feature type="binding site" description="axial binding residue" evidence="1">
    <location>
        <position position="366"/>
    </location>
    <ligand>
        <name>heme</name>
        <dbReference type="ChEBI" id="CHEBI:30413"/>
        <label>1</label>
    </ligand>
    <ligandPart>
        <name>Fe</name>
        <dbReference type="ChEBI" id="CHEBI:18248"/>
    </ligandPart>
</feature>
<feature type="binding site" description="axial binding residue" evidence="1">
    <location>
        <position position="380"/>
    </location>
    <ligand>
        <name>heme</name>
        <dbReference type="ChEBI" id="CHEBI:30413"/>
        <label>2</label>
    </ligand>
    <ligandPart>
        <name>Fe</name>
        <dbReference type="ChEBI" id="CHEBI:18248"/>
    </ligandPart>
</feature>
<feature type="binding site" description="axial binding residue" evidence="1">
    <location>
        <position position="436"/>
    </location>
    <ligand>
        <name>heme</name>
        <dbReference type="ChEBI" id="CHEBI:30413"/>
        <label>1</label>
    </ligand>
    <ligandPart>
        <name>Fe</name>
        <dbReference type="ChEBI" id="CHEBI:18248"/>
    </ligandPart>
</feature>
<feature type="binding site" description="axial binding residue" evidence="1">
    <location>
        <position position="450"/>
    </location>
    <ligand>
        <name>heme</name>
        <dbReference type="ChEBI" id="CHEBI:30413"/>
        <label>2</label>
    </ligand>
    <ligandPart>
        <name>Fe</name>
        <dbReference type="ChEBI" id="CHEBI:18248"/>
    </ligandPart>
</feature>
<feature type="binding site" evidence="2">
    <location>
        <begin position="575"/>
        <end position="578"/>
    </location>
    <ligand>
        <name>NADP(+)</name>
        <dbReference type="ChEBI" id="CHEBI:58349"/>
    </ligand>
</feature>
<feature type="binding site" evidence="2">
    <location>
        <begin position="726"/>
        <end position="727"/>
    </location>
    <ligand>
        <name>NADP(+)</name>
        <dbReference type="ChEBI" id="CHEBI:58349"/>
    </ligand>
</feature>
<feature type="glycosylation site" description="N-linked (GlcNAc...) asparagine" evidence="3">
    <location>
        <position position="78"/>
    </location>
</feature>
<feature type="glycosylation site" description="N-linked (GlcNAc...) asparagine" evidence="3">
    <location>
        <position position="91"/>
    </location>
</feature>
<feature type="glycosylation site" description="N-linked (GlcNAc...) asparagine" evidence="3">
    <location>
        <position position="111"/>
    </location>
</feature>
<feature type="glycosylation site" description="N-linked (GlcNAc...) asparagine" evidence="3">
    <location>
        <position position="143"/>
    </location>
</feature>
<feature type="glycosylation site" description="N-linked (GlcNAc...) asparagine" evidence="3">
    <location>
        <position position="155"/>
    </location>
</feature>
<feature type="glycosylation site" description="N-linked (GlcNAc...) asparagine" evidence="3">
    <location>
        <position position="207"/>
    </location>
</feature>
<feature type="glycosylation site" description="N-linked (GlcNAc...) asparagine" evidence="3">
    <location>
        <position position="615"/>
    </location>
</feature>
<feature type="glycosylation site" description="N-linked (GlcNAc...) asparagine" evidence="3">
    <location>
        <position position="744"/>
    </location>
</feature>
<keyword id="KW-1003">Cell membrane</keyword>
<keyword id="KW-0186">Copper</keyword>
<keyword id="KW-0187">Copper transport</keyword>
<keyword id="KW-0249">Electron transport</keyword>
<keyword id="KW-0274">FAD</keyword>
<keyword id="KW-0285">Flavoprotein</keyword>
<keyword id="KW-0325">Glycoprotein</keyword>
<keyword id="KW-0349">Heme</keyword>
<keyword id="KW-0406">Ion transport</keyword>
<keyword id="KW-0408">Iron</keyword>
<keyword id="KW-0410">Iron transport</keyword>
<keyword id="KW-0472">Membrane</keyword>
<keyword id="KW-0479">Metal-binding</keyword>
<keyword id="KW-0521">NADP</keyword>
<keyword id="KW-0560">Oxidoreductase</keyword>
<keyword id="KW-1185">Reference proteome</keyword>
<keyword id="KW-0732">Signal</keyword>
<keyword id="KW-0812">Transmembrane</keyword>
<keyword id="KW-1133">Transmembrane helix</keyword>
<keyword id="KW-0813">Transport</keyword>
<keyword id="KW-0843">Virulence</keyword>